<proteinExistence type="evidence at transcript level"/>
<keyword id="KW-0963">Cytoplasm</keyword>
<keyword id="KW-0456">Lyase</keyword>
<keyword id="KW-0862">Zinc</keyword>
<comment type="function">
    <text>Reversible hydration of carbon dioxide.</text>
</comment>
<comment type="catalytic activity">
    <reaction>
        <text>hydrogencarbonate + H(+) = CO2 + H2O</text>
        <dbReference type="Rhea" id="RHEA:10748"/>
        <dbReference type="ChEBI" id="CHEBI:15377"/>
        <dbReference type="ChEBI" id="CHEBI:15378"/>
        <dbReference type="ChEBI" id="CHEBI:16526"/>
        <dbReference type="ChEBI" id="CHEBI:17544"/>
        <dbReference type="EC" id="4.2.1.1"/>
    </reaction>
</comment>
<comment type="subcellular location">
    <subcellularLocation>
        <location evidence="2">Cytoplasm</location>
    </subcellularLocation>
</comment>
<comment type="domain">
    <text evidence="1">Possesses a transit-like peptide, but it is proposed that this peptide is not removed and that therefore the enzyme stays in the cytoplasm instead of going to the chloroplast.</text>
</comment>
<comment type="similarity">
    <text evidence="2">Belongs to the beta-class carbonic anhydrase family.</text>
</comment>
<reference key="1">
    <citation type="journal article" date="1995" name="Plant Mol. Biol.">
        <title>Molecular comparison of carbonic anhydrase from Flaveria species demonstrating different photosynthetic pathways.</title>
        <authorList>
            <person name="Ludwig M."/>
            <person name="Burnell J.N."/>
        </authorList>
    </citation>
    <scope>NUCLEOTIDE SEQUENCE [MRNA]</scope>
    <source>
        <tissue>Leaf</tissue>
    </source>
</reference>
<accession>P46511</accession>
<dbReference type="EC" id="4.2.1.1"/>
<dbReference type="EMBL" id="U08402">
    <property type="protein sequence ID" value="AAA86942.1"/>
    <property type="molecule type" value="mRNA"/>
</dbReference>
<dbReference type="PIR" id="S61882">
    <property type="entry name" value="S61882"/>
</dbReference>
<dbReference type="SMR" id="P46511"/>
<dbReference type="GO" id="GO:0005737">
    <property type="term" value="C:cytoplasm"/>
    <property type="evidence" value="ECO:0007669"/>
    <property type="project" value="UniProtKB-SubCell"/>
</dbReference>
<dbReference type="GO" id="GO:0004089">
    <property type="term" value="F:carbonate dehydratase activity"/>
    <property type="evidence" value="ECO:0007669"/>
    <property type="project" value="UniProtKB-EC"/>
</dbReference>
<dbReference type="GO" id="GO:0008270">
    <property type="term" value="F:zinc ion binding"/>
    <property type="evidence" value="ECO:0007669"/>
    <property type="project" value="InterPro"/>
</dbReference>
<dbReference type="GO" id="GO:0015976">
    <property type="term" value="P:carbon utilization"/>
    <property type="evidence" value="ECO:0007669"/>
    <property type="project" value="InterPro"/>
</dbReference>
<dbReference type="CDD" id="cd00884">
    <property type="entry name" value="beta_CA_cladeB"/>
    <property type="match status" value="1"/>
</dbReference>
<dbReference type="FunFam" id="3.40.1050.10:FF:000002">
    <property type="entry name" value="Carbonic anhydrase"/>
    <property type="match status" value="1"/>
</dbReference>
<dbReference type="Gene3D" id="3.40.1050.10">
    <property type="entry name" value="Carbonic anhydrase"/>
    <property type="match status" value="1"/>
</dbReference>
<dbReference type="InterPro" id="IPR045066">
    <property type="entry name" value="Beta_CA_cladeB"/>
</dbReference>
<dbReference type="InterPro" id="IPR001765">
    <property type="entry name" value="Carbonic_anhydrase"/>
</dbReference>
<dbReference type="InterPro" id="IPR015892">
    <property type="entry name" value="Carbonic_anhydrase_CS"/>
</dbReference>
<dbReference type="InterPro" id="IPR036874">
    <property type="entry name" value="Carbonic_anhydrase_sf"/>
</dbReference>
<dbReference type="PANTHER" id="PTHR11002:SF56">
    <property type="entry name" value="BETA CARBONIC ANHYDRASE 2, CHLOROPLASTIC"/>
    <property type="match status" value="1"/>
</dbReference>
<dbReference type="PANTHER" id="PTHR11002">
    <property type="entry name" value="CARBONIC ANHYDRASE"/>
    <property type="match status" value="1"/>
</dbReference>
<dbReference type="Pfam" id="PF00484">
    <property type="entry name" value="Pro_CA"/>
    <property type="match status" value="1"/>
</dbReference>
<dbReference type="SMART" id="SM00947">
    <property type="entry name" value="Pro_CA"/>
    <property type="match status" value="1"/>
</dbReference>
<dbReference type="SUPFAM" id="SSF53056">
    <property type="entry name" value="beta-carbonic anhydrase, cab"/>
    <property type="match status" value="1"/>
</dbReference>
<dbReference type="PROSITE" id="PS00704">
    <property type="entry name" value="PROK_CO2_ANHYDRASE_1"/>
    <property type="match status" value="1"/>
</dbReference>
<dbReference type="PROSITE" id="PS00705">
    <property type="entry name" value="PROK_CO2_ANHYDRASE_2"/>
    <property type="match status" value="1"/>
</dbReference>
<name>CAHX_FLABR</name>
<protein>
    <recommendedName>
        <fullName>Carbonic anhydrase</fullName>
        <ecNumber>4.2.1.1</ecNumber>
    </recommendedName>
    <alternativeName>
        <fullName>Carbonate dehydratase</fullName>
    </alternativeName>
</protein>
<organism>
    <name type="scientific">Flaveria brownii</name>
    <name type="common">Brown's yellowtops</name>
    <dbReference type="NCBI Taxonomy" id="33111"/>
    <lineage>
        <taxon>Eukaryota</taxon>
        <taxon>Viridiplantae</taxon>
        <taxon>Streptophyta</taxon>
        <taxon>Embryophyta</taxon>
        <taxon>Tracheophyta</taxon>
        <taxon>Spermatophyta</taxon>
        <taxon>Magnoliopsida</taxon>
        <taxon>eudicotyledons</taxon>
        <taxon>Gunneridae</taxon>
        <taxon>Pentapetalae</taxon>
        <taxon>asterids</taxon>
        <taxon>campanulids</taxon>
        <taxon>Asterales</taxon>
        <taxon>Asteraceae</taxon>
        <taxon>Asteroideae</taxon>
        <taxon>Heliantheae alliance</taxon>
        <taxon>Tageteae</taxon>
        <taxon>Flaveria</taxon>
    </lineage>
</organism>
<evidence type="ECO:0000250" key="1"/>
<evidence type="ECO:0000305" key="2"/>
<sequence>MSTASAFATNVPSFVNASSLKKSSTSSARSGVLSAKFTCNSSSSSSSATPPSLIRNEPVFAAPAPIITPNWTEDGNESYEEAIDALKKMLIEKGELEPVAAARIDQITAQAAAPDTKAPFDPVERIKSGFVKFKTEKFVTNPALYDELAKGQSPKFMVFACSDSRVCPSHVLDFQPGEAFVVRNVANMVPPFDKTKYSGVGAAVEYAVLHLKVQEIFVIGHSRCGGIKGLMTFPDEGPHSTDFIEDWVKVCLPAKSKVVAEHNGTHLDDQCVLCEKEAVNVSLGNLLTYPFVRDGLRNNTLALKGGHYDFVNGTFELWALDFGLSSPTSV</sequence>
<feature type="chain" id="PRO_0000077454" description="Carbonic anhydrase">
    <location>
        <begin position="1"/>
        <end position="330"/>
    </location>
</feature>
<feature type="region of interest" description="Chloroplast transit peptide-like">
    <location>
        <begin position="1"/>
        <end position="109"/>
    </location>
</feature>